<keyword id="KW-0249">Electron transport</keyword>
<keyword id="KW-0349">Heme</keyword>
<keyword id="KW-0408">Iron</keyword>
<keyword id="KW-0472">Membrane</keyword>
<keyword id="KW-0479">Metal-binding</keyword>
<keyword id="KW-0496">Mitochondrion</keyword>
<keyword id="KW-0999">Mitochondrion inner membrane</keyword>
<keyword id="KW-0812">Transmembrane</keyword>
<keyword id="KW-1133">Transmembrane helix</keyword>
<keyword id="KW-0813">Transport</keyword>
<keyword id="KW-0816">Tricarboxylic acid cycle</keyword>
<proteinExistence type="inferred from homology"/>
<comment type="function">
    <text evidence="1">Membrane-anchoring subunit of succinate dehydrogenase (SDH).</text>
</comment>
<comment type="cofactor">
    <cofactor evidence="1">
        <name>heme</name>
        <dbReference type="ChEBI" id="CHEBI:30413"/>
    </cofactor>
    <text evidence="1">The heme is bound between the two transmembrane subunits.</text>
</comment>
<comment type="pathway">
    <text>Carbohydrate metabolism; tricarboxylic acid cycle.</text>
</comment>
<comment type="subunit">
    <text evidence="1">Part of an enzyme complex containing four subunits: a flavoprotein, an iron-sulfur protein, plus two membrane-anchoring proteins.</text>
</comment>
<comment type="subcellular location">
    <subcellularLocation>
        <location evidence="1">Mitochondrion inner membrane</location>
        <topology evidence="1">Multi-pass membrane protein</topology>
    </subcellularLocation>
</comment>
<evidence type="ECO:0000250" key="1"/>
<evidence type="ECO:0000255" key="2"/>
<reference key="1">
    <citation type="journal article" date="1995" name="J. Mol. Biol.">
        <title>Complete sequence of the mitochondrial DNA of the rhodophyte Chondrus crispus (Gigartinales). Gene content and genome organization.</title>
        <authorList>
            <person name="Leblanc C."/>
            <person name="Boyen C."/>
            <person name="Richard O."/>
            <person name="Bonnard G."/>
            <person name="Grienenberger J.-M."/>
            <person name="Kloareg B."/>
        </authorList>
    </citation>
    <scope>NUCLEOTIDE SEQUENCE [GENOMIC DNA]</scope>
    <source>
        <tissue>Apices</tissue>
    </source>
</reference>
<gene>
    <name type="primary">SDH4</name>
    <name type="synonym">SDHD</name>
</gene>
<dbReference type="EMBL" id="Z47547">
    <property type="protein sequence ID" value="CAA87621.1"/>
    <property type="molecule type" value="Genomic_DNA"/>
</dbReference>
<dbReference type="PIR" id="S59105">
    <property type="entry name" value="S59105"/>
</dbReference>
<dbReference type="RefSeq" id="NP_062495.1">
    <property type="nucleotide sequence ID" value="NC_001677.2"/>
</dbReference>
<dbReference type="SMR" id="P54323"/>
<dbReference type="GeneID" id="809388"/>
<dbReference type="KEGG" id="ccp:ChcroMp16"/>
<dbReference type="UniPathway" id="UPA00223"/>
<dbReference type="GO" id="GO:0005743">
    <property type="term" value="C:mitochondrial inner membrane"/>
    <property type="evidence" value="ECO:0007669"/>
    <property type="project" value="UniProtKB-SubCell"/>
</dbReference>
<dbReference type="GO" id="GO:0046872">
    <property type="term" value="F:metal ion binding"/>
    <property type="evidence" value="ECO:0007669"/>
    <property type="project" value="UniProtKB-KW"/>
</dbReference>
<dbReference type="GO" id="GO:0006099">
    <property type="term" value="P:tricarboxylic acid cycle"/>
    <property type="evidence" value="ECO:0007669"/>
    <property type="project" value="UniProtKB-UniPathway"/>
</dbReference>
<dbReference type="Gene3D" id="1.20.1300.10">
    <property type="entry name" value="Fumarate reductase/succinate dehydrogenase, transmembrane subunit"/>
    <property type="match status" value="1"/>
</dbReference>
<dbReference type="InterPro" id="IPR034804">
    <property type="entry name" value="SQR/QFR_C/D"/>
</dbReference>
<dbReference type="SUPFAM" id="SSF81343">
    <property type="entry name" value="Fumarate reductase respiratory complex transmembrane subunits"/>
    <property type="match status" value="1"/>
</dbReference>
<feature type="chain" id="PRO_0000158711" description="Succinate dehydrogenase membrane anchor subunit">
    <location>
        <begin position="1"/>
        <end position="84"/>
    </location>
</feature>
<feature type="topological domain" description="Mitochondrial matrix" evidence="2">
    <location>
        <begin position="1"/>
        <end position="3"/>
    </location>
</feature>
<feature type="transmembrane region" description="Helical" evidence="2">
    <location>
        <begin position="4"/>
        <end position="24"/>
    </location>
</feature>
<feature type="topological domain" description="Mitochondrial intermembrane" evidence="2">
    <location>
        <begin position="25"/>
        <end position="31"/>
    </location>
</feature>
<feature type="transmembrane region" description="Helical" evidence="2">
    <location>
        <begin position="32"/>
        <end position="52"/>
    </location>
</feature>
<feature type="topological domain" description="Mitochondrial matrix" evidence="2">
    <location>
        <begin position="53"/>
        <end position="58"/>
    </location>
</feature>
<feature type="transmembrane region" description="Helical" evidence="2">
    <location>
        <begin position="59"/>
        <end position="81"/>
    </location>
</feature>
<feature type="topological domain" description="Mitochondrial intermembrane" evidence="2">
    <location>
        <begin position="82"/>
        <end position="84"/>
    </location>
</feature>
<feature type="binding site" description="axial binding residue" evidence="1">
    <location>
        <position position="37"/>
    </location>
    <ligand>
        <name>heme</name>
        <dbReference type="ChEBI" id="CHEBI:30413"/>
        <note>ligand shared with second transmembrane subunit</note>
    </ligand>
    <ligandPart>
        <name>Fe</name>
        <dbReference type="ChEBI" id="CHEBI:18248"/>
    </ligandPart>
</feature>
<feature type="binding site" evidence="1">
    <location>
        <position position="49"/>
    </location>
    <ligand>
        <name>a ubiquinone</name>
        <dbReference type="ChEBI" id="CHEBI:16389"/>
    </ligand>
</feature>
<organism>
    <name type="scientific">Chondrus crispus</name>
    <name type="common">Carrageen Irish moss</name>
    <name type="synonym">Polymorpha crispa</name>
    <dbReference type="NCBI Taxonomy" id="2769"/>
    <lineage>
        <taxon>Eukaryota</taxon>
        <taxon>Rhodophyta</taxon>
        <taxon>Florideophyceae</taxon>
        <taxon>Rhodymeniophycidae</taxon>
        <taxon>Gigartinales</taxon>
        <taxon>Gigartinaceae</taxon>
        <taxon>Chondrus</taxon>
    </lineage>
</organism>
<name>DHSD_CHOCR</name>
<protein>
    <recommendedName>
        <fullName>Succinate dehydrogenase membrane anchor subunit</fullName>
    </recommendedName>
    <alternativeName>
        <fullName>Succinate dehydrogenase, subunit IV</fullName>
    </alternativeName>
</protein>
<sequence length="84" mass="9906">MITFQWLIVRVVALFISLTILIDIEMFVVMLSFLIIHISIGLKAIIHDYIHFQKIKLMLLILLRVSAIEISRSFRTFYIIIKNT</sequence>
<accession>P54323</accession>
<geneLocation type="mitochondrion"/>